<dbReference type="EMBL" id="M96844">
    <property type="protein sequence ID" value="AAA27542.1"/>
    <property type="molecule type" value="Genomic_DNA"/>
</dbReference>
<dbReference type="EMBL" id="CP000021">
    <property type="protein sequence ID" value="AAW87995.1"/>
    <property type="molecule type" value="Genomic_DNA"/>
</dbReference>
<dbReference type="RefSeq" id="WP_011263745.1">
    <property type="nucleotide sequence ID" value="NC_006841.2"/>
</dbReference>
<dbReference type="RefSeq" id="YP_206883.1">
    <property type="nucleotide sequence ID" value="NC_006841.2"/>
</dbReference>
<dbReference type="SMR" id="P35327"/>
<dbReference type="STRING" id="312309.VF_A0925"/>
<dbReference type="BindingDB" id="P35327"/>
<dbReference type="ChEMBL" id="CHEMBL5867"/>
<dbReference type="EnsemblBacteria" id="AAW87995">
    <property type="protein sequence ID" value="AAW87995"/>
    <property type="gene ID" value="VF_A0925"/>
</dbReference>
<dbReference type="GeneID" id="54166246"/>
<dbReference type="KEGG" id="vfi:VF_A0925"/>
<dbReference type="PATRIC" id="fig|312309.11.peg.3527"/>
<dbReference type="eggNOG" id="COG2197">
    <property type="taxonomic scope" value="Bacteria"/>
</dbReference>
<dbReference type="HOGENOM" id="CLU_072786_7_0_6"/>
<dbReference type="OrthoDB" id="9774661at2"/>
<dbReference type="Proteomes" id="UP000000537">
    <property type="component" value="Chromosome II"/>
</dbReference>
<dbReference type="CollecTF" id="EXPREG_00000a50"/>
<dbReference type="GO" id="GO:0032993">
    <property type="term" value="C:protein-DNA complex"/>
    <property type="evidence" value="ECO:0000315"/>
    <property type="project" value="CollecTF"/>
</dbReference>
<dbReference type="GO" id="GO:0001216">
    <property type="term" value="F:DNA-binding transcription activator activity"/>
    <property type="evidence" value="ECO:0000315"/>
    <property type="project" value="CollecTF"/>
</dbReference>
<dbReference type="GO" id="GO:0000976">
    <property type="term" value="F:transcription cis-regulatory region binding"/>
    <property type="evidence" value="ECO:0000315"/>
    <property type="project" value="CollecTF"/>
</dbReference>
<dbReference type="GO" id="GO:0008218">
    <property type="term" value="P:bioluminescence"/>
    <property type="evidence" value="ECO:0007669"/>
    <property type="project" value="UniProtKB-KW"/>
</dbReference>
<dbReference type="GO" id="GO:0045893">
    <property type="term" value="P:positive regulation of DNA-templated transcription"/>
    <property type="evidence" value="ECO:0000270"/>
    <property type="project" value="CollecTF"/>
</dbReference>
<dbReference type="GO" id="GO:0009372">
    <property type="term" value="P:quorum sensing"/>
    <property type="evidence" value="ECO:0007669"/>
    <property type="project" value="UniProtKB-KW"/>
</dbReference>
<dbReference type="CDD" id="cd06170">
    <property type="entry name" value="LuxR_C_like"/>
    <property type="match status" value="1"/>
</dbReference>
<dbReference type="Gene3D" id="3.30.450.80">
    <property type="entry name" value="Transcription factor LuxR-like, autoinducer-binding domain"/>
    <property type="match status" value="1"/>
</dbReference>
<dbReference type="Gene3D" id="1.10.10.10">
    <property type="entry name" value="Winged helix-like DNA-binding domain superfamily/Winged helix DNA-binding domain"/>
    <property type="match status" value="1"/>
</dbReference>
<dbReference type="InterPro" id="IPR016032">
    <property type="entry name" value="Sig_transdc_resp-reg_C-effctor"/>
</dbReference>
<dbReference type="InterPro" id="IPR005143">
    <property type="entry name" value="TF_LuxR_autoind-bd_dom"/>
</dbReference>
<dbReference type="InterPro" id="IPR036693">
    <property type="entry name" value="TF_LuxR_autoind-bd_dom_sf"/>
</dbReference>
<dbReference type="InterPro" id="IPR000792">
    <property type="entry name" value="Tscrpt_reg_LuxR_C"/>
</dbReference>
<dbReference type="InterPro" id="IPR036388">
    <property type="entry name" value="WH-like_DNA-bd_sf"/>
</dbReference>
<dbReference type="PANTHER" id="PTHR44688">
    <property type="entry name" value="DNA-BINDING TRANSCRIPTIONAL ACTIVATOR DEVR_DOSR"/>
    <property type="match status" value="1"/>
</dbReference>
<dbReference type="PANTHER" id="PTHR44688:SF16">
    <property type="entry name" value="DNA-BINDING TRANSCRIPTIONAL ACTIVATOR DEVR_DOSR"/>
    <property type="match status" value="1"/>
</dbReference>
<dbReference type="Pfam" id="PF03472">
    <property type="entry name" value="Autoind_bind"/>
    <property type="match status" value="1"/>
</dbReference>
<dbReference type="Pfam" id="PF00196">
    <property type="entry name" value="GerE"/>
    <property type="match status" value="1"/>
</dbReference>
<dbReference type="PRINTS" id="PR00038">
    <property type="entry name" value="HTHLUXR"/>
</dbReference>
<dbReference type="SMART" id="SM00421">
    <property type="entry name" value="HTH_LUXR"/>
    <property type="match status" value="1"/>
</dbReference>
<dbReference type="SUPFAM" id="SSF46894">
    <property type="entry name" value="C-terminal effector domain of the bipartite response regulators"/>
    <property type="match status" value="1"/>
</dbReference>
<dbReference type="SUPFAM" id="SSF75516">
    <property type="entry name" value="Pheromone-binding domain of LuxR-like quorum-sensing transcription factors"/>
    <property type="match status" value="1"/>
</dbReference>
<dbReference type="PROSITE" id="PS00622">
    <property type="entry name" value="HTH_LUXR_1"/>
    <property type="match status" value="1"/>
</dbReference>
<dbReference type="PROSITE" id="PS50043">
    <property type="entry name" value="HTH_LUXR_2"/>
    <property type="match status" value="1"/>
</dbReference>
<evidence type="ECO:0000255" key="1">
    <source>
        <dbReference type="PROSITE-ProRule" id="PRU00411"/>
    </source>
</evidence>
<evidence type="ECO:0000305" key="2"/>
<sequence>MNIKNINANEKIIDKIKTCNNNKDINQCLSEIAKIIHCEYYLFAIIYPHSIIKPDVSIIDNYPEKWRKYYDDAGLLEYDPVVDYSKSHHSPINWNVFEKKTIKKESPNVIKEAQESGLITGFSFPIHTASNGFGMLSFAHSDKDIYTDSLFLHASTNVPLMLPSLVDNYQKINTTRKKSDSILTKREKECLAWASEGKSTWDISKILGCSERTVTFHLTNTQMKLNTTNRCQSISKAILTGAINCPYLKN</sequence>
<reference key="1">
    <citation type="journal article" date="1992" name="Mol. Mar. Biol. Biotechnol.">
        <title>Sequencing and analysis of luxR and luxI, the luminescence regulatory genes from the squid light organ symbiont Vibrio fischeri ES114.</title>
        <authorList>
            <person name="Gray K.M."/>
            <person name="Greenberg E.P."/>
        </authorList>
    </citation>
    <scope>NUCLEOTIDE SEQUENCE [GENOMIC DNA]</scope>
</reference>
<reference key="2">
    <citation type="journal article" date="2005" name="Proc. Natl. Acad. Sci. U.S.A.">
        <title>Complete genome sequence of Vibrio fischeri: a symbiotic bacterium with pathogenic congeners.</title>
        <authorList>
            <person name="Ruby E.G."/>
            <person name="Urbanowski M."/>
            <person name="Campbell J."/>
            <person name="Dunn A."/>
            <person name="Faini M."/>
            <person name="Gunsalus R."/>
            <person name="Lostroh P."/>
            <person name="Lupp C."/>
            <person name="McCann J."/>
            <person name="Millikan D."/>
            <person name="Schaefer A."/>
            <person name="Stabb E."/>
            <person name="Stevens A."/>
            <person name="Visick K."/>
            <person name="Whistler C."/>
            <person name="Greenberg E.P."/>
        </authorList>
    </citation>
    <scope>NUCLEOTIDE SEQUENCE [LARGE SCALE GENOMIC DNA]</scope>
    <source>
        <strain>ATCC 700601 / ES114</strain>
    </source>
</reference>
<accession>P35327</accession>
<accession>Q5DZ01</accession>
<organism>
    <name type="scientific">Aliivibrio fischeri (strain ATCC 700601 / ES114)</name>
    <name type="common">Vibrio fischeri</name>
    <dbReference type="NCBI Taxonomy" id="312309"/>
    <lineage>
        <taxon>Bacteria</taxon>
        <taxon>Pseudomonadati</taxon>
        <taxon>Pseudomonadota</taxon>
        <taxon>Gammaproteobacteria</taxon>
        <taxon>Vibrionales</taxon>
        <taxon>Vibrionaceae</taxon>
        <taxon>Aliivibrio</taxon>
    </lineage>
</organism>
<name>LUXS_ALIF1</name>
<protein>
    <recommendedName>
        <fullName>Transcriptional activator protein LuxR</fullName>
    </recommendedName>
</protein>
<keyword id="KW-0010">Activator</keyword>
<keyword id="KW-0238">DNA-binding</keyword>
<keyword id="KW-0455">Luminescence</keyword>
<keyword id="KW-0673">Quorum sensing</keyword>
<keyword id="KW-1185">Reference proteome</keyword>
<keyword id="KW-0804">Transcription</keyword>
<keyword id="KW-0805">Transcription regulation</keyword>
<proteinExistence type="inferred from homology"/>
<gene>
    <name type="primary">luxR</name>
    <name type="ordered locus">VF_A0925</name>
</gene>
<feature type="chain" id="PRO_0000184162" description="Transcriptional activator protein LuxR">
    <location>
        <begin position="1"/>
        <end position="250"/>
    </location>
</feature>
<feature type="domain" description="HTH luxR-type" evidence="1">
    <location>
        <begin position="176"/>
        <end position="241"/>
    </location>
</feature>
<feature type="DNA-binding region" description="H-T-H motif" evidence="1">
    <location>
        <begin position="200"/>
        <end position="219"/>
    </location>
</feature>
<comment type="function">
    <text>Transcriptional activator of the bioluminescence operon. Binds to the OHHL autoinducer.</text>
</comment>
<comment type="similarity">
    <text evidence="2">Belongs to the autoinducer-regulated transcriptional regulatory protein family.</text>
</comment>